<reference key="1">
    <citation type="journal article" date="2003" name="Proc. Natl. Acad. Sci. U.S.A.">
        <title>The complete genome sequence of Mycobacterium bovis.</title>
        <authorList>
            <person name="Garnier T."/>
            <person name="Eiglmeier K."/>
            <person name="Camus J.-C."/>
            <person name="Medina N."/>
            <person name="Mansoor H."/>
            <person name="Pryor M."/>
            <person name="Duthoy S."/>
            <person name="Grondin S."/>
            <person name="Lacroix C."/>
            <person name="Monsempe C."/>
            <person name="Simon S."/>
            <person name="Harris B."/>
            <person name="Atkin R."/>
            <person name="Doggett J."/>
            <person name="Mayes R."/>
            <person name="Keating L."/>
            <person name="Wheeler P.R."/>
            <person name="Parkhill J."/>
            <person name="Barrell B.G."/>
            <person name="Cole S.T."/>
            <person name="Gordon S.V."/>
            <person name="Hewinson R.G."/>
        </authorList>
    </citation>
    <scope>NUCLEOTIDE SEQUENCE [LARGE SCALE GENOMIC DNA]</scope>
    <source>
        <strain>ATCC BAA-935 / AF2122/97</strain>
    </source>
</reference>
<reference key="2">
    <citation type="journal article" date="2017" name="Genome Announc.">
        <title>Updated reference genome sequence and annotation of Mycobacterium bovis AF2122/97.</title>
        <authorList>
            <person name="Malone K.M."/>
            <person name="Farrell D."/>
            <person name="Stuber T.P."/>
            <person name="Schubert O.T."/>
            <person name="Aebersold R."/>
            <person name="Robbe-Austerman S."/>
            <person name="Gordon S.V."/>
        </authorList>
    </citation>
    <scope>NUCLEOTIDE SEQUENCE [LARGE SCALE GENOMIC DNA]</scope>
    <scope>GENOME REANNOTATION</scope>
    <source>
        <strain>ATCC BAA-935 / AF2122/97</strain>
    </source>
</reference>
<feature type="chain" id="PRO_0000104046" description="Uncharacterized protein Mb2598c">
    <location>
        <begin position="1"/>
        <end position="341"/>
    </location>
</feature>
<organism>
    <name type="scientific">Mycobacterium bovis (strain ATCC BAA-935 / AF2122/97)</name>
    <dbReference type="NCBI Taxonomy" id="233413"/>
    <lineage>
        <taxon>Bacteria</taxon>
        <taxon>Bacillati</taxon>
        <taxon>Actinomycetota</taxon>
        <taxon>Actinomycetes</taxon>
        <taxon>Mycobacteriales</taxon>
        <taxon>Mycobacteriaceae</taxon>
        <taxon>Mycobacterium</taxon>
        <taxon>Mycobacterium tuberculosis complex</taxon>
    </lineage>
</organism>
<protein>
    <recommendedName>
        <fullName>Uncharacterized protein Mb2598c</fullName>
    </recommendedName>
</protein>
<gene>
    <name type="ordered locus">BQ2027_MB2598C</name>
</gene>
<proteinExistence type="predicted"/>
<sequence length="341" mass="38003">MRDFHCPNCGQRLAFENSACLSCGSALGFSLGRMALLVIADDADVQLCANLHLAQCNWLVPSDQLGGLCSSCVLTIERPSDTNTAGLAEFARAEGAKRRLIAELHELKLPIVGRDQDPDHGLAFRLLSSAHENVTTGHQNGVITLDLAEGDDVHREQLRVEMDEPYRTLLGHFRHEIGHYYFYRLIASSSDYLSRFNELFGDPDADYSQALDRHYRGGPPEGWQDSFVSSYATMHASEDWAETFAHYLHIRDALDTAAWCGLAPASATFDRPALGPSAFNTIIDKWLPLSWSLNMVNRSMGHDDLYPFVLPAAVLEKMRFIHTVVDEVAPDFEPAHSRRTV</sequence>
<keyword id="KW-1185">Reference proteome</keyword>
<accession>P65010</accession>
<accession>A0A1R3Y2E8</accession>
<accession>Q50653</accession>
<accession>X2BKU3</accession>
<dbReference type="EMBL" id="LT708304">
    <property type="protein sequence ID" value="SIU01216.1"/>
    <property type="molecule type" value="Genomic_DNA"/>
</dbReference>
<dbReference type="RefSeq" id="NP_856244.1">
    <property type="nucleotide sequence ID" value="NC_002945.3"/>
</dbReference>
<dbReference type="RefSeq" id="WP_003413332.1">
    <property type="nucleotide sequence ID" value="NC_002945.4"/>
</dbReference>
<dbReference type="KEGG" id="mbo:BQ2027_MB2598C"/>
<dbReference type="PATRIC" id="fig|233413.5.peg.2857"/>
<dbReference type="Proteomes" id="UP000001419">
    <property type="component" value="Chromosome"/>
</dbReference>
<dbReference type="Gene3D" id="3.40.390.70">
    <property type="match status" value="1"/>
</dbReference>
<dbReference type="InterPro" id="IPR031321">
    <property type="entry name" value="UCP012641"/>
</dbReference>
<dbReference type="InterPro" id="IPR011201">
    <property type="entry name" value="Zinc-ribbon_6_bact"/>
</dbReference>
<dbReference type="Pfam" id="PF15887">
    <property type="entry name" value="Peptidase_Mx"/>
    <property type="match status" value="1"/>
</dbReference>
<dbReference type="Pfam" id="PF10005">
    <property type="entry name" value="Zn_ribbon_DZR_6"/>
    <property type="match status" value="1"/>
</dbReference>
<dbReference type="PIRSF" id="PIRSF012641">
    <property type="entry name" value="UCP012641"/>
    <property type="match status" value="1"/>
</dbReference>
<name>Y2598_MYCBO</name>